<sequence>MAKTSAVEKNKRRRTTVANQAAKRAGLKAIIMNQALPIEERFKASIKLASLPRDGSKTRIRNRCEVSGRPRAYYRKLRMSRIALRELGNLGKVPGIVKSSW</sequence>
<organism>
    <name type="scientific">Rhizobium johnstonii (strain DSM 114642 / LMG 32736 / 3841)</name>
    <name type="common">Rhizobium leguminosarum bv. viciae</name>
    <dbReference type="NCBI Taxonomy" id="216596"/>
    <lineage>
        <taxon>Bacteria</taxon>
        <taxon>Pseudomonadati</taxon>
        <taxon>Pseudomonadota</taxon>
        <taxon>Alphaproteobacteria</taxon>
        <taxon>Hyphomicrobiales</taxon>
        <taxon>Rhizobiaceae</taxon>
        <taxon>Rhizobium/Agrobacterium group</taxon>
        <taxon>Rhizobium</taxon>
        <taxon>Rhizobium johnstonii</taxon>
    </lineage>
</organism>
<name>RS14_RHIJ3</name>
<comment type="function">
    <text evidence="1">Binds 16S rRNA, required for the assembly of 30S particles and may also be responsible for determining the conformation of the 16S rRNA at the A site.</text>
</comment>
<comment type="subunit">
    <text evidence="1">Part of the 30S ribosomal subunit. Contacts proteins S3 and S10.</text>
</comment>
<comment type="similarity">
    <text evidence="1">Belongs to the universal ribosomal protein uS14 family.</text>
</comment>
<evidence type="ECO:0000255" key="1">
    <source>
        <dbReference type="HAMAP-Rule" id="MF_00537"/>
    </source>
</evidence>
<evidence type="ECO:0000305" key="2"/>
<feature type="chain" id="PRO_1000128535" description="Small ribosomal subunit protein uS14">
    <location>
        <begin position="1"/>
        <end position="101"/>
    </location>
</feature>
<dbReference type="EMBL" id="AM236080">
    <property type="protein sequence ID" value="CAK07282.1"/>
    <property type="molecule type" value="Genomic_DNA"/>
</dbReference>
<dbReference type="RefSeq" id="WP_003547561.1">
    <property type="nucleotide sequence ID" value="NC_008380.1"/>
</dbReference>
<dbReference type="SMR" id="Q1MIC8"/>
<dbReference type="EnsemblBacteria" id="CAK07282">
    <property type="protein sequence ID" value="CAK07282"/>
    <property type="gene ID" value="RL1787"/>
</dbReference>
<dbReference type="GeneID" id="84669500"/>
<dbReference type="KEGG" id="rle:RL1787"/>
<dbReference type="eggNOG" id="COG0199">
    <property type="taxonomic scope" value="Bacteria"/>
</dbReference>
<dbReference type="HOGENOM" id="CLU_139869_0_1_5"/>
<dbReference type="Proteomes" id="UP000006575">
    <property type="component" value="Chromosome"/>
</dbReference>
<dbReference type="GO" id="GO:0005737">
    <property type="term" value="C:cytoplasm"/>
    <property type="evidence" value="ECO:0007669"/>
    <property type="project" value="UniProtKB-ARBA"/>
</dbReference>
<dbReference type="GO" id="GO:0015935">
    <property type="term" value="C:small ribosomal subunit"/>
    <property type="evidence" value="ECO:0007669"/>
    <property type="project" value="TreeGrafter"/>
</dbReference>
<dbReference type="GO" id="GO:0019843">
    <property type="term" value="F:rRNA binding"/>
    <property type="evidence" value="ECO:0007669"/>
    <property type="project" value="UniProtKB-UniRule"/>
</dbReference>
<dbReference type="GO" id="GO:0003735">
    <property type="term" value="F:structural constituent of ribosome"/>
    <property type="evidence" value="ECO:0007669"/>
    <property type="project" value="InterPro"/>
</dbReference>
<dbReference type="GO" id="GO:0006412">
    <property type="term" value="P:translation"/>
    <property type="evidence" value="ECO:0007669"/>
    <property type="project" value="UniProtKB-UniRule"/>
</dbReference>
<dbReference type="FunFam" id="1.10.287.1480:FF:000001">
    <property type="entry name" value="30S ribosomal protein S14"/>
    <property type="match status" value="1"/>
</dbReference>
<dbReference type="Gene3D" id="1.10.287.1480">
    <property type="match status" value="1"/>
</dbReference>
<dbReference type="HAMAP" id="MF_00537">
    <property type="entry name" value="Ribosomal_uS14_1"/>
    <property type="match status" value="1"/>
</dbReference>
<dbReference type="InterPro" id="IPR001209">
    <property type="entry name" value="Ribosomal_uS14"/>
</dbReference>
<dbReference type="InterPro" id="IPR023036">
    <property type="entry name" value="Ribosomal_uS14_bac/plastid"/>
</dbReference>
<dbReference type="InterPro" id="IPR018271">
    <property type="entry name" value="Ribosomal_uS14_CS"/>
</dbReference>
<dbReference type="NCBIfam" id="NF006477">
    <property type="entry name" value="PRK08881.1"/>
    <property type="match status" value="1"/>
</dbReference>
<dbReference type="PANTHER" id="PTHR19836">
    <property type="entry name" value="30S RIBOSOMAL PROTEIN S14"/>
    <property type="match status" value="1"/>
</dbReference>
<dbReference type="PANTHER" id="PTHR19836:SF19">
    <property type="entry name" value="SMALL RIBOSOMAL SUBUNIT PROTEIN US14M"/>
    <property type="match status" value="1"/>
</dbReference>
<dbReference type="Pfam" id="PF00253">
    <property type="entry name" value="Ribosomal_S14"/>
    <property type="match status" value="1"/>
</dbReference>
<dbReference type="SUPFAM" id="SSF57716">
    <property type="entry name" value="Glucocorticoid receptor-like (DNA-binding domain)"/>
    <property type="match status" value="1"/>
</dbReference>
<dbReference type="PROSITE" id="PS00527">
    <property type="entry name" value="RIBOSOMAL_S14"/>
    <property type="match status" value="1"/>
</dbReference>
<accession>Q1MIC8</accession>
<protein>
    <recommendedName>
        <fullName evidence="1">Small ribosomal subunit protein uS14</fullName>
    </recommendedName>
    <alternativeName>
        <fullName evidence="2">30S ribosomal protein S14</fullName>
    </alternativeName>
</protein>
<keyword id="KW-0687">Ribonucleoprotein</keyword>
<keyword id="KW-0689">Ribosomal protein</keyword>
<keyword id="KW-0694">RNA-binding</keyword>
<keyword id="KW-0699">rRNA-binding</keyword>
<reference key="1">
    <citation type="journal article" date="2006" name="Genome Biol.">
        <title>The genome of Rhizobium leguminosarum has recognizable core and accessory components.</title>
        <authorList>
            <person name="Young J.P.W."/>
            <person name="Crossman L.C."/>
            <person name="Johnston A.W.B."/>
            <person name="Thomson N.R."/>
            <person name="Ghazoui Z.F."/>
            <person name="Hull K.H."/>
            <person name="Wexler M."/>
            <person name="Curson A.R.J."/>
            <person name="Todd J.D."/>
            <person name="Poole P.S."/>
            <person name="Mauchline T.H."/>
            <person name="East A.K."/>
            <person name="Quail M.A."/>
            <person name="Churcher C."/>
            <person name="Arrowsmith C."/>
            <person name="Cherevach I."/>
            <person name="Chillingworth T."/>
            <person name="Clarke K."/>
            <person name="Cronin A."/>
            <person name="Davis P."/>
            <person name="Fraser A."/>
            <person name="Hance Z."/>
            <person name="Hauser H."/>
            <person name="Jagels K."/>
            <person name="Moule S."/>
            <person name="Mungall K."/>
            <person name="Norbertczak H."/>
            <person name="Rabbinowitsch E."/>
            <person name="Sanders M."/>
            <person name="Simmonds M."/>
            <person name="Whitehead S."/>
            <person name="Parkhill J."/>
        </authorList>
    </citation>
    <scope>NUCLEOTIDE SEQUENCE [LARGE SCALE GENOMIC DNA]</scope>
    <source>
        <strain>DSM 114642 / LMG 32736 / 3841</strain>
    </source>
</reference>
<gene>
    <name evidence="1" type="primary">rpsN</name>
    <name type="ordered locus">RL1787</name>
</gene>
<proteinExistence type="inferred from homology"/>